<keyword id="KW-0028">Amino-acid biosynthesis</keyword>
<keyword id="KW-0368">Histidine biosynthesis</keyword>
<keyword id="KW-0378">Hydrolase</keyword>
<keyword id="KW-0486">Methionine biosynthesis</keyword>
<keyword id="KW-0511">Multifunctional enzyme</keyword>
<keyword id="KW-0521">NADP</keyword>
<keyword id="KW-0554">One-carbon metabolism</keyword>
<keyword id="KW-0560">Oxidoreductase</keyword>
<keyword id="KW-0658">Purine biosynthesis</keyword>
<keyword id="KW-1185">Reference proteome</keyword>
<accession>A5G1W5</accession>
<feature type="chain" id="PRO_1000069224" description="Bifunctional protein FolD">
    <location>
        <begin position="1"/>
        <end position="279"/>
    </location>
</feature>
<feature type="binding site" evidence="1">
    <location>
        <begin position="162"/>
        <end position="164"/>
    </location>
    <ligand>
        <name>NADP(+)</name>
        <dbReference type="ChEBI" id="CHEBI:58349"/>
    </ligand>
</feature>
<feature type="binding site" evidence="1">
    <location>
        <position position="187"/>
    </location>
    <ligand>
        <name>NADP(+)</name>
        <dbReference type="ChEBI" id="CHEBI:58349"/>
    </ligand>
</feature>
<feature type="binding site" evidence="1">
    <location>
        <position position="228"/>
    </location>
    <ligand>
        <name>NADP(+)</name>
        <dbReference type="ChEBI" id="CHEBI:58349"/>
    </ligand>
</feature>
<dbReference type="EC" id="1.5.1.5" evidence="1"/>
<dbReference type="EC" id="3.5.4.9" evidence="1"/>
<dbReference type="EMBL" id="CP000697">
    <property type="protein sequence ID" value="ABQ31847.1"/>
    <property type="molecule type" value="Genomic_DNA"/>
</dbReference>
<dbReference type="RefSeq" id="WP_012040212.1">
    <property type="nucleotide sequence ID" value="NC_009484.1"/>
</dbReference>
<dbReference type="SMR" id="A5G1W5"/>
<dbReference type="STRING" id="349163.Acry_2656"/>
<dbReference type="KEGG" id="acr:Acry_2656"/>
<dbReference type="eggNOG" id="COG0190">
    <property type="taxonomic scope" value="Bacteria"/>
</dbReference>
<dbReference type="HOGENOM" id="CLU_034045_2_1_5"/>
<dbReference type="UniPathway" id="UPA00193"/>
<dbReference type="Proteomes" id="UP000000245">
    <property type="component" value="Chromosome"/>
</dbReference>
<dbReference type="GO" id="GO:0005829">
    <property type="term" value="C:cytosol"/>
    <property type="evidence" value="ECO:0007669"/>
    <property type="project" value="TreeGrafter"/>
</dbReference>
<dbReference type="GO" id="GO:0004477">
    <property type="term" value="F:methenyltetrahydrofolate cyclohydrolase activity"/>
    <property type="evidence" value="ECO:0007669"/>
    <property type="project" value="UniProtKB-UniRule"/>
</dbReference>
<dbReference type="GO" id="GO:0004488">
    <property type="term" value="F:methylenetetrahydrofolate dehydrogenase (NADP+) activity"/>
    <property type="evidence" value="ECO:0007669"/>
    <property type="project" value="UniProtKB-UniRule"/>
</dbReference>
<dbReference type="GO" id="GO:0000105">
    <property type="term" value="P:L-histidine biosynthetic process"/>
    <property type="evidence" value="ECO:0007669"/>
    <property type="project" value="UniProtKB-KW"/>
</dbReference>
<dbReference type="GO" id="GO:0009086">
    <property type="term" value="P:methionine biosynthetic process"/>
    <property type="evidence" value="ECO:0007669"/>
    <property type="project" value="UniProtKB-KW"/>
</dbReference>
<dbReference type="GO" id="GO:0006164">
    <property type="term" value="P:purine nucleotide biosynthetic process"/>
    <property type="evidence" value="ECO:0007669"/>
    <property type="project" value="UniProtKB-KW"/>
</dbReference>
<dbReference type="GO" id="GO:0035999">
    <property type="term" value="P:tetrahydrofolate interconversion"/>
    <property type="evidence" value="ECO:0007669"/>
    <property type="project" value="UniProtKB-UniRule"/>
</dbReference>
<dbReference type="CDD" id="cd01080">
    <property type="entry name" value="NAD_bind_m-THF_DH_Cyclohyd"/>
    <property type="match status" value="1"/>
</dbReference>
<dbReference type="FunFam" id="3.40.50.720:FF:000006">
    <property type="entry name" value="Bifunctional protein FolD"/>
    <property type="match status" value="1"/>
</dbReference>
<dbReference type="FunFam" id="3.40.50.10860:FF:000005">
    <property type="entry name" value="C-1-tetrahydrofolate synthase, cytoplasmic, putative"/>
    <property type="match status" value="1"/>
</dbReference>
<dbReference type="Gene3D" id="3.40.50.10860">
    <property type="entry name" value="Leucine Dehydrogenase, chain A, domain 1"/>
    <property type="match status" value="1"/>
</dbReference>
<dbReference type="Gene3D" id="3.40.50.720">
    <property type="entry name" value="NAD(P)-binding Rossmann-like Domain"/>
    <property type="match status" value="1"/>
</dbReference>
<dbReference type="HAMAP" id="MF_01576">
    <property type="entry name" value="THF_DHG_CYH"/>
    <property type="match status" value="1"/>
</dbReference>
<dbReference type="InterPro" id="IPR046346">
    <property type="entry name" value="Aminoacid_DH-like_N_sf"/>
</dbReference>
<dbReference type="InterPro" id="IPR036291">
    <property type="entry name" value="NAD(P)-bd_dom_sf"/>
</dbReference>
<dbReference type="InterPro" id="IPR000672">
    <property type="entry name" value="THF_DH/CycHdrlase"/>
</dbReference>
<dbReference type="InterPro" id="IPR020630">
    <property type="entry name" value="THF_DH/CycHdrlase_cat_dom"/>
</dbReference>
<dbReference type="InterPro" id="IPR020867">
    <property type="entry name" value="THF_DH/CycHdrlase_CS"/>
</dbReference>
<dbReference type="InterPro" id="IPR020631">
    <property type="entry name" value="THF_DH/CycHdrlase_NAD-bd_dom"/>
</dbReference>
<dbReference type="NCBIfam" id="NF008058">
    <property type="entry name" value="PRK10792.1"/>
    <property type="match status" value="1"/>
</dbReference>
<dbReference type="NCBIfam" id="NF010785">
    <property type="entry name" value="PRK14188.1"/>
    <property type="match status" value="1"/>
</dbReference>
<dbReference type="PANTHER" id="PTHR48099:SF5">
    <property type="entry name" value="C-1-TETRAHYDROFOLATE SYNTHASE, CYTOPLASMIC"/>
    <property type="match status" value="1"/>
</dbReference>
<dbReference type="PANTHER" id="PTHR48099">
    <property type="entry name" value="C-1-TETRAHYDROFOLATE SYNTHASE, CYTOPLASMIC-RELATED"/>
    <property type="match status" value="1"/>
</dbReference>
<dbReference type="Pfam" id="PF00763">
    <property type="entry name" value="THF_DHG_CYH"/>
    <property type="match status" value="1"/>
</dbReference>
<dbReference type="Pfam" id="PF02882">
    <property type="entry name" value="THF_DHG_CYH_C"/>
    <property type="match status" value="1"/>
</dbReference>
<dbReference type="PRINTS" id="PR00085">
    <property type="entry name" value="THFDHDRGNASE"/>
</dbReference>
<dbReference type="SUPFAM" id="SSF53223">
    <property type="entry name" value="Aminoacid dehydrogenase-like, N-terminal domain"/>
    <property type="match status" value="1"/>
</dbReference>
<dbReference type="SUPFAM" id="SSF51735">
    <property type="entry name" value="NAD(P)-binding Rossmann-fold domains"/>
    <property type="match status" value="1"/>
</dbReference>
<dbReference type="PROSITE" id="PS00766">
    <property type="entry name" value="THF_DHG_CYH_1"/>
    <property type="match status" value="1"/>
</dbReference>
<dbReference type="PROSITE" id="PS00767">
    <property type="entry name" value="THF_DHG_CYH_2"/>
    <property type="match status" value="1"/>
</dbReference>
<reference key="1">
    <citation type="submission" date="2007-05" db="EMBL/GenBank/DDBJ databases">
        <title>Complete sequence of chromosome of Acidiphilium cryptum JF-5.</title>
        <authorList>
            <consortium name="US DOE Joint Genome Institute"/>
            <person name="Copeland A."/>
            <person name="Lucas S."/>
            <person name="Lapidus A."/>
            <person name="Barry K."/>
            <person name="Detter J.C."/>
            <person name="Glavina del Rio T."/>
            <person name="Hammon N."/>
            <person name="Israni S."/>
            <person name="Dalin E."/>
            <person name="Tice H."/>
            <person name="Pitluck S."/>
            <person name="Sims D."/>
            <person name="Brettin T."/>
            <person name="Bruce D."/>
            <person name="Han C."/>
            <person name="Schmutz J."/>
            <person name="Larimer F."/>
            <person name="Land M."/>
            <person name="Hauser L."/>
            <person name="Kyrpides N."/>
            <person name="Kim E."/>
            <person name="Magnuson T."/>
            <person name="Richardson P."/>
        </authorList>
    </citation>
    <scope>NUCLEOTIDE SEQUENCE [LARGE SCALE GENOMIC DNA]</scope>
    <source>
        <strain>JF-5</strain>
    </source>
</reference>
<proteinExistence type="inferred from homology"/>
<organism>
    <name type="scientific">Acidiphilium cryptum (strain JF-5)</name>
    <dbReference type="NCBI Taxonomy" id="349163"/>
    <lineage>
        <taxon>Bacteria</taxon>
        <taxon>Pseudomonadati</taxon>
        <taxon>Pseudomonadota</taxon>
        <taxon>Alphaproteobacteria</taxon>
        <taxon>Acetobacterales</taxon>
        <taxon>Acidocellaceae</taxon>
        <taxon>Acidiphilium</taxon>
    </lineage>
</organism>
<name>FOLD_ACICJ</name>
<evidence type="ECO:0000255" key="1">
    <source>
        <dbReference type="HAMAP-Rule" id="MF_01576"/>
    </source>
</evidence>
<gene>
    <name evidence="1" type="primary">folD</name>
    <name type="ordered locus">Acry_2656</name>
</gene>
<sequence length="279" mass="28214">MAARVIDGKAVAAALRAEVAARAATLPYAPGLAVVLVGEDPASQVYVRNKERAAKAAGFASETIRLPASASQAELLALIARLNHDPAVDGILVQLPLPAGIDPQAVIRAIDPAKDVDGFHPDNVAALALGTPFLVPCTPRGVMKLLAAAGIAPRGARALVLGRSNIVGRPMAALLLAADATVTIAHSRTRDLAAECRRAEILIAAVGRAEMVRGDWVSPGATVIDVGINRTAAGGLVGDVAYAEAAAVAGAITPVPGGVGPMTIACLLENTLIAAAARR</sequence>
<protein>
    <recommendedName>
        <fullName evidence="1">Bifunctional protein FolD</fullName>
    </recommendedName>
    <domain>
        <recommendedName>
            <fullName evidence="1">Methylenetetrahydrofolate dehydrogenase</fullName>
            <ecNumber evidence="1">1.5.1.5</ecNumber>
        </recommendedName>
    </domain>
    <domain>
        <recommendedName>
            <fullName evidence="1">Methenyltetrahydrofolate cyclohydrolase</fullName>
            <ecNumber evidence="1">3.5.4.9</ecNumber>
        </recommendedName>
    </domain>
</protein>
<comment type="function">
    <text evidence="1">Catalyzes the oxidation of 5,10-methylenetetrahydrofolate to 5,10-methenyltetrahydrofolate and then the hydrolysis of 5,10-methenyltetrahydrofolate to 10-formyltetrahydrofolate.</text>
</comment>
<comment type="catalytic activity">
    <reaction evidence="1">
        <text>(6R)-5,10-methylene-5,6,7,8-tetrahydrofolate + NADP(+) = (6R)-5,10-methenyltetrahydrofolate + NADPH</text>
        <dbReference type="Rhea" id="RHEA:22812"/>
        <dbReference type="ChEBI" id="CHEBI:15636"/>
        <dbReference type="ChEBI" id="CHEBI:57455"/>
        <dbReference type="ChEBI" id="CHEBI:57783"/>
        <dbReference type="ChEBI" id="CHEBI:58349"/>
        <dbReference type="EC" id="1.5.1.5"/>
    </reaction>
</comment>
<comment type="catalytic activity">
    <reaction evidence="1">
        <text>(6R)-5,10-methenyltetrahydrofolate + H2O = (6R)-10-formyltetrahydrofolate + H(+)</text>
        <dbReference type="Rhea" id="RHEA:23700"/>
        <dbReference type="ChEBI" id="CHEBI:15377"/>
        <dbReference type="ChEBI" id="CHEBI:15378"/>
        <dbReference type="ChEBI" id="CHEBI:57455"/>
        <dbReference type="ChEBI" id="CHEBI:195366"/>
        <dbReference type="EC" id="3.5.4.9"/>
    </reaction>
</comment>
<comment type="pathway">
    <text evidence="1">One-carbon metabolism; tetrahydrofolate interconversion.</text>
</comment>
<comment type="subunit">
    <text evidence="1">Homodimer.</text>
</comment>
<comment type="similarity">
    <text evidence="1">Belongs to the tetrahydrofolate dehydrogenase/cyclohydrolase family.</text>
</comment>